<sequence>MIVMQFPREEYFAPGHRGCAGCGAAIVARLLLKVAGKDTIITNATGCLEVMTTPYPETSWRVPWIHTAFENAAATASGIEAAVKALKRKRGKFADKKINVIAIGGDGGTADIGFQALSGAMERGHDILYIMYDNEAYMNTGIQRSSSTPFMAATTTSPAGSKIRGEDRPKKDMTMIMAAHGIPYVATACISYPEDFMRKVKKALSIEGPKFIQVLQPCTTGWGYPPEKTIEIGRLAVETGIFPLYEIENGEFRITYKPAKRKPVREYLKMQKRYRHLTDEDIERIQKYIDEKCKLLGL</sequence>
<organism>
    <name type="scientific">Methanocaldococcus jannaschii (strain ATCC 43067 / DSM 2661 / JAL-1 / JCM 10045 / NBRC 100440)</name>
    <name type="common">Methanococcus jannaschii</name>
    <dbReference type="NCBI Taxonomy" id="243232"/>
    <lineage>
        <taxon>Archaea</taxon>
        <taxon>Methanobacteriati</taxon>
        <taxon>Methanobacteriota</taxon>
        <taxon>Methanomada group</taxon>
        <taxon>Methanococci</taxon>
        <taxon>Methanococcales</taxon>
        <taxon>Methanocaldococcaceae</taxon>
        <taxon>Methanocaldococcus</taxon>
    </lineage>
</organism>
<gene>
    <name type="primary">porB</name>
    <name type="ordered locus">MJ0266</name>
</gene>
<keyword id="KW-0004">4Fe-4S</keyword>
<keyword id="KW-0408">Iron</keyword>
<keyword id="KW-0411">Iron-sulfur</keyword>
<keyword id="KW-0479">Metal-binding</keyword>
<keyword id="KW-0560">Oxidoreductase</keyword>
<keyword id="KW-1185">Reference proteome</keyword>
<comment type="catalytic activity">
    <reaction>
        <text>2 oxidized [2Fe-2S]-[ferredoxin] + pyruvate + CoA = 2 reduced [2Fe-2S]-[ferredoxin] + acetyl-CoA + CO2 + H(+)</text>
        <dbReference type="Rhea" id="RHEA:12765"/>
        <dbReference type="Rhea" id="RHEA-COMP:10000"/>
        <dbReference type="Rhea" id="RHEA-COMP:10001"/>
        <dbReference type="ChEBI" id="CHEBI:15361"/>
        <dbReference type="ChEBI" id="CHEBI:15378"/>
        <dbReference type="ChEBI" id="CHEBI:16526"/>
        <dbReference type="ChEBI" id="CHEBI:33737"/>
        <dbReference type="ChEBI" id="CHEBI:33738"/>
        <dbReference type="ChEBI" id="CHEBI:57287"/>
        <dbReference type="ChEBI" id="CHEBI:57288"/>
        <dbReference type="EC" id="1.2.7.1"/>
    </reaction>
</comment>
<comment type="cofactor">
    <cofactor evidence="2">
        <name>[4Fe-4S] cluster</name>
        <dbReference type="ChEBI" id="CHEBI:49883"/>
    </cofactor>
    <text evidence="2">Binds 1 [4Fe-4S] cluster per subunit.</text>
</comment>
<comment type="subunit">
    <text evidence="1">Heterotetramer of one alpha, one beta, one delta and one gamma chain.</text>
</comment>
<accession>Q57714</accession>
<dbReference type="EC" id="1.2.7.1"/>
<dbReference type="EMBL" id="L77117">
    <property type="protein sequence ID" value="AAB98253.1"/>
    <property type="molecule type" value="Genomic_DNA"/>
</dbReference>
<dbReference type="PIR" id="C64333">
    <property type="entry name" value="C64333"/>
</dbReference>
<dbReference type="SMR" id="Q57714"/>
<dbReference type="FunCoup" id="Q57714">
    <property type="interactions" value="94"/>
</dbReference>
<dbReference type="STRING" id="243232.MJ_0266"/>
<dbReference type="PaxDb" id="243232-MJ_0266"/>
<dbReference type="EnsemblBacteria" id="AAB98253">
    <property type="protein sequence ID" value="AAB98253"/>
    <property type="gene ID" value="MJ_0266"/>
</dbReference>
<dbReference type="KEGG" id="mja:MJ_0266"/>
<dbReference type="eggNOG" id="arCOG01601">
    <property type="taxonomic scope" value="Archaea"/>
</dbReference>
<dbReference type="HOGENOM" id="CLU_058423_0_0_2"/>
<dbReference type="InParanoid" id="Q57714"/>
<dbReference type="PhylomeDB" id="Q57714"/>
<dbReference type="Proteomes" id="UP000000805">
    <property type="component" value="Chromosome"/>
</dbReference>
<dbReference type="GO" id="GO:0051539">
    <property type="term" value="F:4 iron, 4 sulfur cluster binding"/>
    <property type="evidence" value="ECO:0007669"/>
    <property type="project" value="UniProtKB-KW"/>
</dbReference>
<dbReference type="GO" id="GO:0046872">
    <property type="term" value="F:metal ion binding"/>
    <property type="evidence" value="ECO:0007669"/>
    <property type="project" value="UniProtKB-KW"/>
</dbReference>
<dbReference type="GO" id="GO:0019164">
    <property type="term" value="F:pyruvate synthase activity"/>
    <property type="evidence" value="ECO:0007669"/>
    <property type="project" value="UniProtKB-EC"/>
</dbReference>
<dbReference type="GO" id="GO:0030976">
    <property type="term" value="F:thiamine pyrophosphate binding"/>
    <property type="evidence" value="ECO:0007669"/>
    <property type="project" value="InterPro"/>
</dbReference>
<dbReference type="CDD" id="cd03376">
    <property type="entry name" value="TPP_PFOR_porB_like"/>
    <property type="match status" value="1"/>
</dbReference>
<dbReference type="Gene3D" id="3.40.50.970">
    <property type="match status" value="1"/>
</dbReference>
<dbReference type="InterPro" id="IPR051479">
    <property type="entry name" value="PorB-like"/>
</dbReference>
<dbReference type="InterPro" id="IPR029061">
    <property type="entry name" value="THDP-binding"/>
</dbReference>
<dbReference type="InterPro" id="IPR011766">
    <property type="entry name" value="TPP_enzyme_TPP-bd"/>
</dbReference>
<dbReference type="NCBIfam" id="NF008819">
    <property type="entry name" value="PRK11865.1"/>
    <property type="match status" value="1"/>
</dbReference>
<dbReference type="PANTHER" id="PTHR42897">
    <property type="entry name" value="PYRUVATE SYNTHASE SUBUNIT PORB"/>
    <property type="match status" value="1"/>
</dbReference>
<dbReference type="PANTHER" id="PTHR42897:SF2">
    <property type="entry name" value="PYRUVATE SYNTHASE SUBUNIT PORB"/>
    <property type="match status" value="1"/>
</dbReference>
<dbReference type="Pfam" id="PF02775">
    <property type="entry name" value="TPP_enzyme_C"/>
    <property type="match status" value="1"/>
</dbReference>
<dbReference type="SUPFAM" id="SSF52518">
    <property type="entry name" value="Thiamin diphosphate-binding fold (THDP-binding)"/>
    <property type="match status" value="1"/>
</dbReference>
<feature type="chain" id="PRO_0000099903" description="Pyruvate synthase subunit PorB">
    <location>
        <begin position="1"/>
        <end position="298"/>
    </location>
</feature>
<feature type="binding site" evidence="2">
    <location>
        <position position="19"/>
    </location>
    <ligand>
        <name>[4Fe-4S] cluster</name>
        <dbReference type="ChEBI" id="CHEBI:49883"/>
    </ligand>
</feature>
<feature type="binding site" evidence="2">
    <location>
        <position position="22"/>
    </location>
    <ligand>
        <name>[4Fe-4S] cluster</name>
        <dbReference type="ChEBI" id="CHEBI:49883"/>
    </ligand>
</feature>
<feature type="binding site" evidence="2">
    <location>
        <position position="47"/>
    </location>
    <ligand>
        <name>[4Fe-4S] cluster</name>
        <dbReference type="ChEBI" id="CHEBI:49883"/>
    </ligand>
</feature>
<feature type="binding site" evidence="2">
    <location>
        <position position="218"/>
    </location>
    <ligand>
        <name>[4Fe-4S] cluster</name>
        <dbReference type="ChEBI" id="CHEBI:49883"/>
    </ligand>
</feature>
<protein>
    <recommendedName>
        <fullName>Pyruvate synthase subunit PorB</fullName>
        <ecNumber>1.2.7.1</ecNumber>
    </recommendedName>
    <alternativeName>
        <fullName>Pyruvate oxidoreductase beta chain</fullName>
        <shortName>POR</shortName>
    </alternativeName>
    <alternativeName>
        <fullName>Pyruvic-ferredoxin oxidoreductase subunit beta</fullName>
    </alternativeName>
</protein>
<evidence type="ECO:0000250" key="1"/>
<evidence type="ECO:0000250" key="2">
    <source>
        <dbReference type="UniProtKB" id="P94692"/>
    </source>
</evidence>
<name>PORB_METJA</name>
<proteinExistence type="inferred from homology"/>
<reference key="1">
    <citation type="journal article" date="1996" name="Science">
        <title>Complete genome sequence of the methanogenic archaeon, Methanococcus jannaschii.</title>
        <authorList>
            <person name="Bult C.J."/>
            <person name="White O."/>
            <person name="Olsen G.J."/>
            <person name="Zhou L."/>
            <person name="Fleischmann R.D."/>
            <person name="Sutton G.G."/>
            <person name="Blake J.A."/>
            <person name="FitzGerald L.M."/>
            <person name="Clayton R.A."/>
            <person name="Gocayne J.D."/>
            <person name="Kerlavage A.R."/>
            <person name="Dougherty B.A."/>
            <person name="Tomb J.-F."/>
            <person name="Adams M.D."/>
            <person name="Reich C.I."/>
            <person name="Overbeek R."/>
            <person name="Kirkness E.F."/>
            <person name="Weinstock K.G."/>
            <person name="Merrick J.M."/>
            <person name="Glodek A."/>
            <person name="Scott J.L."/>
            <person name="Geoghagen N.S.M."/>
            <person name="Weidman J.F."/>
            <person name="Fuhrmann J.L."/>
            <person name="Nguyen D."/>
            <person name="Utterback T.R."/>
            <person name="Kelley J.M."/>
            <person name="Peterson J.D."/>
            <person name="Sadow P.W."/>
            <person name="Hanna M.C."/>
            <person name="Cotton M.D."/>
            <person name="Roberts K.M."/>
            <person name="Hurst M.A."/>
            <person name="Kaine B.P."/>
            <person name="Borodovsky M."/>
            <person name="Klenk H.-P."/>
            <person name="Fraser C.M."/>
            <person name="Smith H.O."/>
            <person name="Woese C.R."/>
            <person name="Venter J.C."/>
        </authorList>
    </citation>
    <scope>NUCLEOTIDE SEQUENCE [LARGE SCALE GENOMIC DNA]</scope>
    <source>
        <strain>ATCC 43067 / DSM 2661 / JAL-1 / JCM 10045 / NBRC 100440</strain>
    </source>
</reference>